<protein>
    <recommendedName>
        <fullName>Abnormal spindle-like microcephaly-associated protein homolog</fullName>
    </recommendedName>
</protein>
<sequence>MANRRVGRGCWEVSPTERRPPAAEEEASSPPVLSLSHFCRSPFLCFGDVLLGASRTLSLALDNPNEEVAEVKISHFPAADLGFSVSQRCFVLQPKEKIVISVNWTPFKEGRVREIMTFLVNDVLKHQAILLGNAEEQKKKKRSLWDTIKKKKISASTSHNRRVSNIQNVNKTFSVSQKVDRVRSPLQACENLAMNEGGPPTENNSLTLEGNKIPISPISPAFNECHGETCLPLSVRRSTTYSSLHASENRELLNVDSASVSKVSFNEKAVTETSFNSINVNGQSGENSKLSLTPNYSSTLNITQSQIHFLSPDSFVNNSHGANNELELVTCLSSDMFMKDNSKPVHLESTIAHEIYQKILSPDSFIKDNYGLNQDVESESVNPILSPNQFLKDNMAYMCTSQQTCKVPLSNENSQVPQSPQDWRKSEVLPRIPECQGSKSPKAIFEELVEMKSNYYSFIKQNNPKFSVVQDISSHSHNKQPKRRPILSATVTKRKATCTRENQTEINKPKAKRCLNSAVGEHEKVINNQKEKEDFHSYLPIIDPILSKSKSYKNEVTPSSTTASVARKRKSDGSMEDADVRVAVTEHTEVREIKRIHFSPSEPKTSAVKKTKNVITPISKRISNREKLNLKKKTDLSIFKTPISKTNKRTKPIIAVAQSNLTFIKPLKTDIPRHPMPFAAKNMFYDERWKEKQEQGFTWWLNFILTPDDFTVKTNISEVNAATLLLGIENQHKISVPRAPTKEEMSLRAYTARCRLNRLRRAACRLFTSEKMIKAIKKLEIEIEARRLIVRKDRHLWKDVGERQKVLNWLLSYNPLWLRIGLETTYGELISLEDNSDVTGLAMFILNRLLWNPDIAAEYRHPTVPHLYRDGHEEALSKFTLKKLLLLVCFLDYAKISRLIDHDPCLFCKDAEFKASKEILLAFSRDFLSGEGDLSRHLGLLGLPVNHVQTPFDEFDFAVTNLAVDLQCGVRLVRTMELLTQNWDLSKKLRIPAISRLQKMHNVDIVLQVLKSRGIELSDEHGNTILSKDIVDRHREKTLRLLWKIAFAFQVDISLNLDQLKEEIAFLKHTKSIKKTISLLSCHSDDLINKKKGKRDSGSFEQYSENIKLLMDWVNAVCAFYNKKVENFTVSFSDGRVLCYLIHHYHPCYVPFDAICQRTTQTVECTQTGSVVLNSSSESDDSSLDMSLKAFDHENTSELYKELLENEKKNFHLVRSAVRDLGGIPAMINHSDMSNTIPDEKVVITYLSFLCARLLDLRKEIRAARLIQTTWRKYKLKTDLKRHQEREKAARIIQSAVINFLAKQRLRKRVNAALVVQKYWRRVLAQRKLLMLKKEKLEKVQNKAASLIQGYWRRYSTRRRFLKLKYYSIILQSRIRMIIAVTSYKRYLWATVTIQRHWRAYLRRKQDQQRYEMLKSSTLIIQSMFRKWKRRKMQSQVKATVILQRAFREWHLRKQAKEENSAIVIQSWYRMHKELRKYIYIRSCVVIIQKRFRCFQAQKLYKRKKESILTIQKYYKAYLKGKIERTNYLQKRAAAIQLQAAFRRLKAHNLCRQIRAAGVIQSYWRMRQDRVRFLNLKKTIIKLQAHVRKHQQLQKYKKMKKAAVIIQTHFRAYIFARKVLASYQKTRSAVIVLQSAYRGMQARKMYIHILTSVIKIQSYYRAYVSKKEFLSLKNATIKLQSIVKVKQTRKQYLHLRAAALFIQQCYRSKKIAAQKREEYMQMRESCIKLQAFVRGYRVRKQMRLQRKAVISLQSYFRMRKARQYYLKMYKAIIVIQNYYHAYKAQVNQRKNFLQVKKAATCLQAAYRGYKVRQLIKQQSIAALKIQSAFRGYNKRIKYQSVLQSIIKIQRWYRAYKTLHDTRTHFLKTKAAVISLQSTYRGWKVRKQIRREHQAALKIQSAFRMAKARKQFRLFKTAALVIQQNFRAWTAGRKQRMEYIELRHAVLMLQSMWKGKTLRRQLQRQHKCAIIIQSYYRMHVQQKKWKIMKKAALLIQKYYRAYSIGREQNHLYLKTKAAVVTLQSAYRGMKVRKRIKDCNKAAVTIQSKYRAYKTKKKYATYRASAIIIQRWYRGIKITNHQHKEYLNLKKTAIKIQSVYRGIRVRRHIQHMHRAATFIKAMFKMHQSRISYHTMRKAAIVIQVRFRAYYQGKMQHEKYLTILKAVKILQASFRGVRVRRTLRKMQIAATLIQSNYRRYRQQTYFNKLKKITKTVQQRYRAMKERNIQFQRYNKLRHSVIYIQAIFRGKKARRHLKMMHIAATLIQRRFRTLMMRRRFLSLKKTAIWIQRKYRAHLYTKHHLQFLRVQNAVIKIQSSYRRWMIRKRMREMHRAATFIQAIFRMRRLHMRYQALKQASVVIQQQYQANRAAKLQRQHYLRQRHSAVILQAAFRGMKTRRHLKSMHSSATLIQSRFRSLLVRRRFISLKKATIFVQRKYRATICAKHKLHQFLHLRKSAITIQSSYRRLMVKKKLQEMQRAAVLIQATFRMHRTYITFQTWKHASILIQQHYRTYRAAKLQRENYIRQWHSAVVIQAAYKGMKARQLLREKHKAAIIIQSTYRMYRQYCFYQKLQWATKIIQEKYRANKKKQKAFQHNELKKETCVQAGFQDMNIKKQIQDQHQAAIIIQKNCKAFKIRKHYLHLRATVVSIQRRYRKLTAVRTQAVICIQSYYRGFKVRKDIQNMHRAATLIQSFYRMHRAKVDYQTKKTAIVVIQNYYRLYVRVKTERKSFLAVQKSVRTIQPAFRGMKVRQKLKNLSEEKMAAIVNQSALCCYRSKTQYEAVQSEGVMIQEWYKASGLACSQEAEYHSQSRAAVTIQKAFCRMATRKLETQKCAALRIQFFLQMAVYRRRFVQQKRAAITLQHYFRTWQTRKQFLLYRKAAVVLQNHYRAFLSAKHQRQVYLQIRSSVIIIQARSKGFIQKRKFQEIKNSTIKIQAIWRRYRAKKYLCKVKAACKIQAWYRCWRAHKEYLAILKAVKIIQGCFYTKLERTRFLNVRASAIIIQRKWRAILSAKIAHEHFLMIKRHRATCLIQAHYRGYKGRQVFLRQKSAALVIQKYIRAREAGKRERIKYIEFKKSTVILQALVRGWLVRKRILEQRAKIRLLHFTAAAYYHLNALRIQRAYKLYLAVKNANKQVNSVICIQRWFRARLQRKRFIQKYHSIKKIEHEGQECLSQQNRAASVIQKAVRHFLLRKKQEKFTSGIIKIQALWRGYSWRKKNDCTKIKAIRLSLQVVNREIREENKLYKRTALALHYLLTYKHLSAILEALKHLEVVTRLSPLCCENMAQSGAISKIFVLIRSCNRSVPCMEVIRYAVQVLLNVSKYEKTTSAVYDVENCIDILLELLQIYREKPGNKVADKGGSIFTKTCCLLAILLKTTNRASDVRSRSKVVDRIYSLYKLTAHKHKMNTERILYKQKKNSSISIPFIPETPVRTRIVSRLKPNWVLRRDNMEEITNPLQAIQMVMDTLGIPY</sequence>
<name>ASPM_PONPY</name>
<proteinExistence type="evidence at transcript level"/>
<reference key="1">
    <citation type="journal article" date="2003" name="Genetics">
        <title>Evolution of the human ASPM gene, a major determinant of brain size.</title>
        <authorList>
            <person name="Zhang J."/>
        </authorList>
    </citation>
    <scope>NUCLEOTIDE SEQUENCE [MRNA]</scope>
</reference>
<reference key="2">
    <citation type="journal article" date="2004" name="Hum. Mol. Genet.">
        <title>Adaptive evolution of ASPM, a major determinant of cerebral cortical size in humans.</title>
        <authorList>
            <person name="Evans P.D."/>
            <person name="Anderson J.R."/>
            <person name="Vallender E.J."/>
            <person name="Gilbert S.L."/>
            <person name="Malcom C.M."/>
            <person name="Dorus S."/>
            <person name="Lahn B.T."/>
        </authorList>
    </citation>
    <scope>NUCLEOTIDE SEQUENCE [GENOMIC DNA]</scope>
</reference>
<reference key="3">
    <citation type="journal article" date="2004" name="PLoS Biol.">
        <title>Accelerated evolution of the ASPM gene controlling brain size begins prior to human brain expansion.</title>
        <authorList>
            <person name="Kouprina N."/>
            <person name="Pavlicek A."/>
            <person name="Mochida G.H."/>
            <person name="Solomon G."/>
            <person name="Gersch W."/>
            <person name="Yoon Y.-H."/>
            <person name="Collura R."/>
            <person name="Ruvolo M."/>
            <person name="Barrett J.C."/>
            <person name="Woods C.G."/>
            <person name="Walsh C.A."/>
            <person name="Jurka J."/>
            <person name="Larionov V."/>
        </authorList>
    </citation>
    <scope>NUCLEOTIDE SEQUENCE [GENOMIC DNA]</scope>
</reference>
<keyword id="KW-0112">Calmodulin-binding</keyword>
<keyword id="KW-0131">Cell cycle</keyword>
<keyword id="KW-0132">Cell division</keyword>
<keyword id="KW-0175">Coiled coil</keyword>
<keyword id="KW-0963">Cytoplasm</keyword>
<keyword id="KW-0206">Cytoskeleton</keyword>
<keyword id="KW-0498">Mitosis</keyword>
<keyword id="KW-0539">Nucleus</keyword>
<keyword id="KW-0597">Phosphoprotein</keyword>
<keyword id="KW-0677">Repeat</keyword>
<evidence type="ECO:0000250" key="1"/>
<evidence type="ECO:0000250" key="2">
    <source>
        <dbReference type="UniProtKB" id="Q8IZT6"/>
    </source>
</evidence>
<evidence type="ECO:0000255" key="3"/>
<evidence type="ECO:0000255" key="4">
    <source>
        <dbReference type="PROSITE-ProRule" id="PRU00044"/>
    </source>
</evidence>
<evidence type="ECO:0000255" key="5">
    <source>
        <dbReference type="PROSITE-ProRule" id="PRU00116"/>
    </source>
</evidence>
<evidence type="ECO:0000256" key="6">
    <source>
        <dbReference type="SAM" id="MobiDB-lite"/>
    </source>
</evidence>
<evidence type="ECO:0000305" key="7"/>
<dbReference type="EMBL" id="AY367067">
    <property type="protein sequence ID" value="AAR12643.1"/>
    <property type="molecule type" value="mRNA"/>
</dbReference>
<dbReference type="EMBL" id="AY488966">
    <property type="protein sequence ID" value="AAR84353.1"/>
    <property type="molecule type" value="Genomic_DNA"/>
</dbReference>
<dbReference type="EMBL" id="AY488939">
    <property type="protein sequence ID" value="AAR84353.1"/>
    <property type="status" value="JOINED"/>
    <property type="molecule type" value="Genomic_DNA"/>
</dbReference>
<dbReference type="EMBL" id="AY488940">
    <property type="protein sequence ID" value="AAR84353.1"/>
    <property type="status" value="JOINED"/>
    <property type="molecule type" value="Genomic_DNA"/>
</dbReference>
<dbReference type="EMBL" id="AY488941">
    <property type="protein sequence ID" value="AAR84353.1"/>
    <property type="status" value="JOINED"/>
    <property type="molecule type" value="Genomic_DNA"/>
</dbReference>
<dbReference type="EMBL" id="AY488942">
    <property type="protein sequence ID" value="AAR84353.1"/>
    <property type="status" value="JOINED"/>
    <property type="molecule type" value="Genomic_DNA"/>
</dbReference>
<dbReference type="EMBL" id="AY488943">
    <property type="protein sequence ID" value="AAR84353.1"/>
    <property type="status" value="JOINED"/>
    <property type="molecule type" value="Genomic_DNA"/>
</dbReference>
<dbReference type="EMBL" id="AY488944">
    <property type="protein sequence ID" value="AAR84353.1"/>
    <property type="status" value="JOINED"/>
    <property type="molecule type" value="Genomic_DNA"/>
</dbReference>
<dbReference type="EMBL" id="AY488945">
    <property type="protein sequence ID" value="AAR84353.1"/>
    <property type="status" value="JOINED"/>
    <property type="molecule type" value="Genomic_DNA"/>
</dbReference>
<dbReference type="EMBL" id="AY488946">
    <property type="protein sequence ID" value="AAR84353.1"/>
    <property type="status" value="JOINED"/>
    <property type="molecule type" value="Genomic_DNA"/>
</dbReference>
<dbReference type="EMBL" id="AY488947">
    <property type="protein sequence ID" value="AAR84353.1"/>
    <property type="status" value="JOINED"/>
    <property type="molecule type" value="Genomic_DNA"/>
</dbReference>
<dbReference type="EMBL" id="AY488948">
    <property type="protein sequence ID" value="AAR84353.1"/>
    <property type="status" value="JOINED"/>
    <property type="molecule type" value="Genomic_DNA"/>
</dbReference>
<dbReference type="EMBL" id="AY488949">
    <property type="protein sequence ID" value="AAR84353.1"/>
    <property type="status" value="JOINED"/>
    <property type="molecule type" value="Genomic_DNA"/>
</dbReference>
<dbReference type="EMBL" id="AY488950">
    <property type="protein sequence ID" value="AAR84353.1"/>
    <property type="status" value="JOINED"/>
    <property type="molecule type" value="Genomic_DNA"/>
</dbReference>
<dbReference type="EMBL" id="AY488951">
    <property type="protein sequence ID" value="AAR84353.1"/>
    <property type="status" value="JOINED"/>
    <property type="molecule type" value="Genomic_DNA"/>
</dbReference>
<dbReference type="EMBL" id="AY488952">
    <property type="protein sequence ID" value="AAR84353.1"/>
    <property type="status" value="JOINED"/>
    <property type="molecule type" value="Genomic_DNA"/>
</dbReference>
<dbReference type="EMBL" id="AY488953">
    <property type="protein sequence ID" value="AAR84353.1"/>
    <property type="status" value="JOINED"/>
    <property type="molecule type" value="Genomic_DNA"/>
</dbReference>
<dbReference type="EMBL" id="AY488954">
    <property type="protein sequence ID" value="AAR84353.1"/>
    <property type="status" value="JOINED"/>
    <property type="molecule type" value="Genomic_DNA"/>
</dbReference>
<dbReference type="EMBL" id="AY488955">
    <property type="protein sequence ID" value="AAR84353.1"/>
    <property type="status" value="JOINED"/>
    <property type="molecule type" value="Genomic_DNA"/>
</dbReference>
<dbReference type="EMBL" id="AY488956">
    <property type="protein sequence ID" value="AAR84353.1"/>
    <property type="status" value="JOINED"/>
    <property type="molecule type" value="Genomic_DNA"/>
</dbReference>
<dbReference type="EMBL" id="AY488957">
    <property type="protein sequence ID" value="AAR84353.1"/>
    <property type="status" value="JOINED"/>
    <property type="molecule type" value="Genomic_DNA"/>
</dbReference>
<dbReference type="EMBL" id="AY488958">
    <property type="protein sequence ID" value="AAR84353.1"/>
    <property type="status" value="JOINED"/>
    <property type="molecule type" value="Genomic_DNA"/>
</dbReference>
<dbReference type="EMBL" id="AY488959">
    <property type="protein sequence ID" value="AAR84353.1"/>
    <property type="status" value="JOINED"/>
    <property type="molecule type" value="Genomic_DNA"/>
</dbReference>
<dbReference type="EMBL" id="AY488960">
    <property type="protein sequence ID" value="AAR84353.1"/>
    <property type="status" value="JOINED"/>
    <property type="molecule type" value="Genomic_DNA"/>
</dbReference>
<dbReference type="EMBL" id="AY488961">
    <property type="protein sequence ID" value="AAR84353.1"/>
    <property type="status" value="JOINED"/>
    <property type="molecule type" value="Genomic_DNA"/>
</dbReference>
<dbReference type="EMBL" id="AY488962">
    <property type="protein sequence ID" value="AAR84353.1"/>
    <property type="status" value="JOINED"/>
    <property type="molecule type" value="Genomic_DNA"/>
</dbReference>
<dbReference type="EMBL" id="AY488963">
    <property type="protein sequence ID" value="AAR84353.1"/>
    <property type="status" value="JOINED"/>
    <property type="molecule type" value="Genomic_DNA"/>
</dbReference>
<dbReference type="EMBL" id="AY488964">
    <property type="protein sequence ID" value="AAR84353.1"/>
    <property type="status" value="JOINED"/>
    <property type="molecule type" value="Genomic_DNA"/>
</dbReference>
<dbReference type="EMBL" id="AY488965">
    <property type="protein sequence ID" value="AAR84353.1"/>
    <property type="status" value="JOINED"/>
    <property type="molecule type" value="Genomic_DNA"/>
</dbReference>
<dbReference type="EMBL" id="AY497017">
    <property type="protein sequence ID" value="AAS48532.1"/>
    <property type="molecule type" value="Genomic_DNA"/>
</dbReference>
<dbReference type="SMR" id="P62294"/>
<dbReference type="GO" id="GO:0005737">
    <property type="term" value="C:cytoplasm"/>
    <property type="evidence" value="ECO:0007669"/>
    <property type="project" value="UniProtKB-SubCell"/>
</dbReference>
<dbReference type="GO" id="GO:0005634">
    <property type="term" value="C:nucleus"/>
    <property type="evidence" value="ECO:0007669"/>
    <property type="project" value="UniProtKB-SubCell"/>
</dbReference>
<dbReference type="GO" id="GO:0000922">
    <property type="term" value="C:spindle pole"/>
    <property type="evidence" value="ECO:0007669"/>
    <property type="project" value="TreeGrafter"/>
</dbReference>
<dbReference type="GO" id="GO:0005516">
    <property type="term" value="F:calmodulin binding"/>
    <property type="evidence" value="ECO:0007669"/>
    <property type="project" value="UniProtKB-KW"/>
</dbReference>
<dbReference type="GO" id="GO:0051301">
    <property type="term" value="P:cell division"/>
    <property type="evidence" value="ECO:0007669"/>
    <property type="project" value="UniProtKB-KW"/>
</dbReference>
<dbReference type="GO" id="GO:0051295">
    <property type="term" value="P:establishment of meiotic spindle localization"/>
    <property type="evidence" value="ECO:0007669"/>
    <property type="project" value="TreeGrafter"/>
</dbReference>
<dbReference type="GO" id="GO:0000278">
    <property type="term" value="P:mitotic cell cycle"/>
    <property type="evidence" value="ECO:0007669"/>
    <property type="project" value="TreeGrafter"/>
</dbReference>
<dbReference type="GO" id="GO:0007051">
    <property type="term" value="P:spindle organization"/>
    <property type="evidence" value="ECO:0007669"/>
    <property type="project" value="TreeGrafter"/>
</dbReference>
<dbReference type="CDD" id="cd21223">
    <property type="entry name" value="CH_ASPM_rpt1"/>
    <property type="match status" value="1"/>
</dbReference>
<dbReference type="CDD" id="cd21224">
    <property type="entry name" value="CH_ASPM_rpt2"/>
    <property type="match status" value="1"/>
</dbReference>
<dbReference type="FunFam" id="1.20.5.190:FF:000052">
    <property type="entry name" value="Abnormal spindle-like microcephaly-associated protein"/>
    <property type="match status" value="1"/>
</dbReference>
<dbReference type="FunFam" id="1.10.418.10:FF:000051">
    <property type="entry name" value="Abnormal spindle-like microcephaly-associated protein homolog"/>
    <property type="match status" value="1"/>
</dbReference>
<dbReference type="FunFam" id="1.20.5.190:FF:000008">
    <property type="entry name" value="Abnormal spindle-like microcephaly-associated protein homolog"/>
    <property type="match status" value="5"/>
</dbReference>
<dbReference type="FunFam" id="1.20.5.190:FF:000009">
    <property type="entry name" value="Abnormal spindle-like microcephaly-associated protein homolog"/>
    <property type="match status" value="4"/>
</dbReference>
<dbReference type="FunFam" id="1.20.5.190:FF:000010">
    <property type="entry name" value="Abnormal spindle-like microcephaly-associated protein homolog"/>
    <property type="match status" value="2"/>
</dbReference>
<dbReference type="FunFam" id="1.20.5.190:FF:000016">
    <property type="entry name" value="Abnormal spindle-like microcephaly-associated protein homolog"/>
    <property type="match status" value="1"/>
</dbReference>
<dbReference type="FunFam" id="1.20.5.190:FF:000023">
    <property type="entry name" value="Abnormal spindle-like microcephaly-associated protein homolog"/>
    <property type="match status" value="1"/>
</dbReference>
<dbReference type="FunFam" id="1.20.5.190:FF:000028">
    <property type="entry name" value="Abnormal spindle-like microcephaly-associated protein homolog"/>
    <property type="match status" value="1"/>
</dbReference>
<dbReference type="FunFam" id="1.20.5.190:FF:000029">
    <property type="entry name" value="Abnormal spindle-like microcephaly-associated protein homolog"/>
    <property type="match status" value="1"/>
</dbReference>
<dbReference type="FunFam" id="1.20.5.190:FF:000030">
    <property type="entry name" value="Abnormal spindle-like microcephaly-associated protein homolog"/>
    <property type="match status" value="1"/>
</dbReference>
<dbReference type="FunFam" id="1.20.5.190:FF:000031">
    <property type="entry name" value="Abnormal spindle-like microcephaly-associated protein homolog"/>
    <property type="match status" value="1"/>
</dbReference>
<dbReference type="FunFam" id="1.20.5.190:FF:000032">
    <property type="entry name" value="Abnormal spindle-like microcephaly-associated protein homolog"/>
    <property type="match status" value="1"/>
</dbReference>
<dbReference type="FunFam" id="1.20.5.190:FF:000034">
    <property type="entry name" value="Abnormal spindle-like microcephaly-associated protein homolog"/>
    <property type="match status" value="1"/>
</dbReference>
<dbReference type="FunFam" id="1.20.5.190:FF:000046">
    <property type="entry name" value="Abnormal spindle-like microcephaly-associated protein homolog"/>
    <property type="match status" value="1"/>
</dbReference>
<dbReference type="FunFam" id="1.20.5.190:FF:000053">
    <property type="entry name" value="Abnormal spindle-like microcephaly-associated protein homolog"/>
    <property type="match status" value="1"/>
</dbReference>
<dbReference type="FunFam" id="1.20.5.190:FF:000059">
    <property type="entry name" value="Abnormal spindle-like microcephaly-associated protein homolog"/>
    <property type="match status" value="1"/>
</dbReference>
<dbReference type="FunFam" id="2.60.40.10:FF:001429">
    <property type="entry name" value="Abnormal spindle-like microcephaly-associated protein homolog"/>
    <property type="match status" value="1"/>
</dbReference>
<dbReference type="Gene3D" id="1.20.5.190">
    <property type="match status" value="34"/>
</dbReference>
<dbReference type="Gene3D" id="1.10.418.10">
    <property type="entry name" value="Calponin-like domain"/>
    <property type="match status" value="2"/>
</dbReference>
<dbReference type="Gene3D" id="2.60.40.10">
    <property type="entry name" value="Immunoglobulins"/>
    <property type="match status" value="1"/>
</dbReference>
<dbReference type="Gene3D" id="1.25.10.10">
    <property type="entry name" value="Leucine-rich Repeat Variant"/>
    <property type="match status" value="1"/>
</dbReference>
<dbReference type="InterPro" id="IPR011989">
    <property type="entry name" value="ARM-like"/>
</dbReference>
<dbReference type="InterPro" id="IPR016024">
    <property type="entry name" value="ARM-type_fold"/>
</dbReference>
<dbReference type="InterPro" id="IPR031549">
    <property type="entry name" value="ASH"/>
</dbReference>
<dbReference type="InterPro" id="IPR051185">
    <property type="entry name" value="ASPM"/>
</dbReference>
<dbReference type="InterPro" id="IPR001715">
    <property type="entry name" value="CH_dom"/>
</dbReference>
<dbReference type="InterPro" id="IPR036872">
    <property type="entry name" value="CH_dom_sf"/>
</dbReference>
<dbReference type="InterPro" id="IPR013783">
    <property type="entry name" value="Ig-like_fold"/>
</dbReference>
<dbReference type="InterPro" id="IPR000048">
    <property type="entry name" value="IQ_motif_EF-hand-BS"/>
</dbReference>
<dbReference type="InterPro" id="IPR027417">
    <property type="entry name" value="P-loop_NTPase"/>
</dbReference>
<dbReference type="PANTHER" id="PTHR22706">
    <property type="entry name" value="ASSEMBLY FACTOR FOR SPINDLE MICROTUBULES"/>
    <property type="match status" value="1"/>
</dbReference>
<dbReference type="PANTHER" id="PTHR22706:SF1">
    <property type="entry name" value="ASSEMBLY FACTOR FOR SPINDLE MICROTUBULES"/>
    <property type="match status" value="1"/>
</dbReference>
<dbReference type="Pfam" id="PF15780">
    <property type="entry name" value="ASH"/>
    <property type="match status" value="1"/>
</dbReference>
<dbReference type="Pfam" id="PF00307">
    <property type="entry name" value="CH"/>
    <property type="match status" value="1"/>
</dbReference>
<dbReference type="Pfam" id="PF00612">
    <property type="entry name" value="IQ"/>
    <property type="match status" value="36"/>
</dbReference>
<dbReference type="SMART" id="SM00033">
    <property type="entry name" value="CH"/>
    <property type="match status" value="2"/>
</dbReference>
<dbReference type="SMART" id="SM00015">
    <property type="entry name" value="IQ"/>
    <property type="match status" value="65"/>
</dbReference>
<dbReference type="SUPFAM" id="SSF48371">
    <property type="entry name" value="ARM repeat"/>
    <property type="match status" value="1"/>
</dbReference>
<dbReference type="SUPFAM" id="SSF47576">
    <property type="entry name" value="Calponin-homology domain, CH-domain"/>
    <property type="match status" value="1"/>
</dbReference>
<dbReference type="SUPFAM" id="SSF52540">
    <property type="entry name" value="P-loop containing nucleoside triphosphate hydrolases"/>
    <property type="match status" value="16"/>
</dbReference>
<dbReference type="PROSITE" id="PS50021">
    <property type="entry name" value="CH"/>
    <property type="match status" value="2"/>
</dbReference>
<dbReference type="PROSITE" id="PS50096">
    <property type="entry name" value="IQ"/>
    <property type="match status" value="39"/>
</dbReference>
<organism>
    <name type="scientific">Pongo pygmaeus</name>
    <name type="common">Bornean orangutan</name>
    <dbReference type="NCBI Taxonomy" id="9600"/>
    <lineage>
        <taxon>Eukaryota</taxon>
        <taxon>Metazoa</taxon>
        <taxon>Chordata</taxon>
        <taxon>Craniata</taxon>
        <taxon>Vertebrata</taxon>
        <taxon>Euteleostomi</taxon>
        <taxon>Mammalia</taxon>
        <taxon>Eutheria</taxon>
        <taxon>Euarchontoglires</taxon>
        <taxon>Primates</taxon>
        <taxon>Haplorrhini</taxon>
        <taxon>Catarrhini</taxon>
        <taxon>Hominidae</taxon>
        <taxon>Pongo</taxon>
    </lineage>
</organism>
<gene>
    <name type="primary">ASPM</name>
</gene>
<accession>P62294</accession>
<comment type="function">
    <text evidence="1">Probable role in mitotic spindle regulation and coordination of mitotic processes. May have a preferential role in regulating neurogenesis (By similarity).</text>
</comment>
<comment type="subcellular location">
    <subcellularLocation>
        <location evidence="1">Cytoplasm</location>
    </subcellularLocation>
    <subcellularLocation>
        <location evidence="1">Cytoplasm</location>
        <location evidence="1">Cytoskeleton</location>
        <location evidence="1">Spindle</location>
    </subcellularLocation>
    <subcellularLocation>
        <location evidence="1">Nucleus</location>
    </subcellularLocation>
    <text evidence="1">The nuclear-cytoplasmic distribution could be regulated by the availability of calmodulin. Localizes to spindle poles during mitosis (By similarity).</text>
</comment>
<feature type="chain" id="PRO_0000191338" description="Abnormal spindle-like microcephaly-associated protein homolog">
    <location>
        <begin position="1"/>
        <end position="3471"/>
    </location>
</feature>
<feature type="domain" description="Calponin-homology (CH) 1" evidence="4">
    <location>
        <begin position="914"/>
        <end position="1050"/>
    </location>
</feature>
<feature type="domain" description="Calponin-homology (CH) 2" evidence="4">
    <location>
        <begin position="1104"/>
        <end position="1255"/>
    </location>
</feature>
<feature type="domain" description="IQ 1" evidence="5">
    <location>
        <begin position="1341"/>
        <end position="1372"/>
    </location>
</feature>
<feature type="domain" description="IQ 2" evidence="5">
    <location>
        <begin position="1387"/>
        <end position="1416"/>
    </location>
</feature>
<feature type="domain" description="IQ 3" evidence="5">
    <location>
        <begin position="1576"/>
        <end position="1607"/>
    </location>
</feature>
<feature type="domain" description="IQ 4" evidence="5">
    <location>
        <begin position="1599"/>
        <end position="1628"/>
    </location>
</feature>
<feature type="domain" description="IQ 5" evidence="5">
    <location>
        <begin position="1626"/>
        <end position="1655"/>
    </location>
</feature>
<feature type="domain" description="IQ 6" evidence="5">
    <location>
        <begin position="1649"/>
        <end position="1678"/>
    </location>
</feature>
<feature type="domain" description="IQ 7" evidence="5">
    <location>
        <begin position="1722"/>
        <end position="1751"/>
    </location>
</feature>
<feature type="domain" description="IQ 8" evidence="5">
    <location>
        <begin position="1745"/>
        <end position="1776"/>
    </location>
</feature>
<feature type="domain" description="IQ 9" evidence="5">
    <location>
        <begin position="1795"/>
        <end position="1824"/>
    </location>
</feature>
<feature type="domain" description="IQ 10" evidence="5">
    <location>
        <begin position="1818"/>
        <end position="1847"/>
    </location>
</feature>
<feature type="domain" description="IQ 11" evidence="5">
    <location>
        <begin position="1868"/>
        <end position="1897"/>
    </location>
</feature>
<feature type="domain" description="IQ 12" evidence="5">
    <location>
        <begin position="1891"/>
        <end position="1922"/>
    </location>
</feature>
<feature type="domain" description="IQ 13" evidence="5">
    <location>
        <begin position="1941"/>
        <end position="1972"/>
    </location>
</feature>
<feature type="domain" description="IQ 14" evidence="5">
    <location>
        <begin position="1964"/>
        <end position="1995"/>
    </location>
</feature>
<feature type="domain" description="IQ 15" evidence="5">
    <location>
        <begin position="2014"/>
        <end position="2043"/>
    </location>
</feature>
<feature type="domain" description="IQ 16" evidence="5">
    <location>
        <begin position="2037"/>
        <end position="2068"/>
    </location>
</feature>
<feature type="domain" description="IQ 17" evidence="5">
    <location>
        <begin position="2087"/>
        <end position="2118"/>
    </location>
</feature>
<feature type="domain" description="IQ 18" evidence="5">
    <location>
        <begin position="2110"/>
        <end position="2141"/>
    </location>
</feature>
<feature type="domain" description="IQ 19" evidence="5">
    <location>
        <begin position="2160"/>
        <end position="2191"/>
    </location>
</feature>
<feature type="domain" description="IQ 20" evidence="5">
    <location>
        <begin position="2183"/>
        <end position="2212"/>
    </location>
</feature>
<feature type="domain" description="IQ 21" evidence="5">
    <location>
        <begin position="2233"/>
        <end position="2264"/>
    </location>
</feature>
<feature type="domain" description="IQ 22" evidence="5">
    <location>
        <begin position="2256"/>
        <end position="2287"/>
    </location>
</feature>
<feature type="domain" description="IQ 23" evidence="5">
    <location>
        <begin position="2305"/>
        <end position="2336"/>
    </location>
</feature>
<feature type="domain" description="IQ 24" evidence="5">
    <location>
        <begin position="2378"/>
        <end position="2409"/>
    </location>
</feature>
<feature type="domain" description="IQ 25" evidence="5">
    <location>
        <begin position="2401"/>
        <end position="2432"/>
    </location>
</feature>
<feature type="domain" description="IQ 26" evidence="5">
    <location>
        <begin position="2451"/>
        <end position="2482"/>
    </location>
</feature>
<feature type="domain" description="IQ 27" evidence="5">
    <location>
        <begin position="2524"/>
        <end position="2555"/>
    </location>
</feature>
<feature type="domain" description="IQ 28" evidence="5">
    <location>
        <begin position="2659"/>
        <end position="2690"/>
    </location>
</feature>
<feature type="domain" description="IQ 29" evidence="5">
    <location>
        <begin position="2682"/>
        <end position="2713"/>
    </location>
</feature>
<feature type="domain" description="IQ 30" evidence="5">
    <location>
        <begin position="2732"/>
        <end position="2761"/>
    </location>
</feature>
<feature type="domain" description="IQ 31" evidence="5">
    <location>
        <begin position="2853"/>
        <end position="2884"/>
    </location>
</feature>
<feature type="domain" description="IQ 32" evidence="5">
    <location>
        <begin position="2903"/>
        <end position="2932"/>
    </location>
</feature>
<feature type="domain" description="IQ 33" evidence="5">
    <location>
        <begin position="2926"/>
        <end position="2957"/>
    </location>
</feature>
<feature type="domain" description="IQ 34" evidence="5">
    <location>
        <begin position="2948"/>
        <end position="2979"/>
    </location>
</feature>
<feature type="domain" description="IQ 35" evidence="5">
    <location>
        <begin position="3023"/>
        <end position="3054"/>
    </location>
</feature>
<feature type="domain" description="IQ 36" evidence="5">
    <location>
        <begin position="3073"/>
        <end position="3104"/>
    </location>
</feature>
<feature type="domain" description="IQ 37" evidence="5">
    <location>
        <begin position="3134"/>
        <end position="3163"/>
    </location>
</feature>
<feature type="domain" description="IQ 38" evidence="5">
    <location>
        <begin position="3175"/>
        <end position="3204"/>
    </location>
</feature>
<feature type="domain" description="IQ 39" evidence="5">
    <location>
        <begin position="3198"/>
        <end position="3229"/>
    </location>
</feature>
<feature type="region of interest" description="Disordered" evidence="6">
    <location>
        <begin position="1"/>
        <end position="26"/>
    </location>
</feature>
<feature type="region of interest" description="Disordered" evidence="6">
    <location>
        <begin position="555"/>
        <end position="576"/>
    </location>
</feature>
<feature type="coiled-coil region" evidence="3">
    <location>
        <begin position="1051"/>
        <end position="1072"/>
    </location>
</feature>
<feature type="compositionally biased region" description="Polar residues" evidence="6">
    <location>
        <begin position="555"/>
        <end position="564"/>
    </location>
</feature>
<feature type="modified residue" description="Phosphoserine" evidence="2">
    <location>
        <position position="274"/>
    </location>
</feature>
<feature type="modified residue" description="Phosphoserine" evidence="2">
    <location>
        <position position="277"/>
    </location>
</feature>
<feature type="modified residue" description="Phosphoserine" evidence="2">
    <location>
        <position position="361"/>
    </location>
</feature>
<feature type="modified residue" description="Phosphoserine" evidence="2">
    <location>
        <position position="386"/>
    </location>
</feature>
<feature type="modified residue" description="Phosphoserine" evidence="2">
    <location>
        <position position="419"/>
    </location>
</feature>
<feature type="modified residue" description="Phosphoserine" evidence="2">
    <location>
        <position position="599"/>
    </location>
</feature>
<feature type="modified residue" description="Phosphoserine" evidence="2">
    <location>
        <position position="1097"/>
    </location>
</feature>
<feature type="sequence conflict" description="In Ref. 1; AAR12643." evidence="7" ref="1">
    <original>K</original>
    <variation>R</variation>
    <location>
        <position position="150"/>
    </location>
</feature>
<feature type="sequence conflict" description="In Ref. 3; AAS48532." evidence="7" ref="3">
    <original>T</original>
    <variation>S</variation>
    <location>
        <position position="303"/>
    </location>
</feature>
<feature type="sequence conflict" description="In Ref. 3; AAS48532." evidence="7" ref="3">
    <location>
        <position position="350"/>
    </location>
</feature>
<feature type="sequence conflict" description="In Ref. 1; AAR12643." evidence="7" ref="1">
    <original>F</original>
    <variation>L</variation>
    <location>
        <position position="710"/>
    </location>
</feature>
<feature type="sequence conflict" description="In Ref. 3; AAS48532." evidence="7" ref="3">
    <original>M</original>
    <variation>I</variation>
    <location>
        <position position="772"/>
    </location>
</feature>
<feature type="sequence conflict" description="In Ref. 1; AAR12643." evidence="7" ref="1">
    <original>Q</original>
    <variation>R</variation>
    <location>
        <position position="1607"/>
    </location>
</feature>
<feature type="sequence conflict" description="In Ref. 1; AAR12643." evidence="7" ref="1">
    <original>L</original>
    <variation>S</variation>
    <location>
        <position position="2398"/>
    </location>
</feature>
<feature type="sequence conflict" description="In Ref. 2; AAR84353." evidence="7" ref="2">
    <original>S</original>
    <variation>A</variation>
    <location>
        <position position="2454"/>
    </location>
</feature>
<feature type="sequence conflict" description="In Ref. 1; AAR12643." evidence="7" ref="1">
    <original>L</original>
    <variation>S</variation>
    <location>
        <position position="2471"/>
    </location>
</feature>
<feature type="sequence conflict" description="In Ref. 1; AAR12643." evidence="7" ref="1">
    <original>T</original>
    <variation>A</variation>
    <location>
        <position position="2490"/>
    </location>
</feature>
<feature type="sequence conflict" description="In Ref. 1; AAR12643." evidence="7" ref="1">
    <original>I</original>
    <variation>M</variation>
    <location>
        <position position="2936"/>
    </location>
</feature>
<feature type="sequence conflict" description="In Ref. 3; AAS48532." evidence="7" ref="3">
    <original>I</original>
    <variation>T</variation>
    <location>
        <position position="3000"/>
    </location>
</feature>
<feature type="sequence conflict" description="In Ref. 3; AAS48532." evidence="7" ref="3">
    <original>R</original>
    <variation>Q</variation>
    <location>
        <position position="3045"/>
    </location>
</feature>
<feature type="sequence conflict" description="In Ref. 1; AAR12643." evidence="7" ref="1">
    <original>E</original>
    <variation>G</variation>
    <location>
        <position position="3196"/>
    </location>
</feature>
<feature type="sequence conflict" description="In Ref. 1; AAR12643." evidence="7" ref="1">
    <original>K</original>
    <variation>R</variation>
    <location>
        <position position="3268"/>
    </location>
</feature>